<feature type="chain" id="PRO_0000386337" description="GTPase Obg">
    <location>
        <begin position="1"/>
        <end position="347"/>
    </location>
</feature>
<feature type="domain" description="Obg" evidence="2">
    <location>
        <begin position="1"/>
        <end position="159"/>
    </location>
</feature>
<feature type="domain" description="OBG-type G" evidence="1">
    <location>
        <begin position="160"/>
        <end position="328"/>
    </location>
</feature>
<feature type="binding site" evidence="1">
    <location>
        <begin position="166"/>
        <end position="173"/>
    </location>
    <ligand>
        <name>GTP</name>
        <dbReference type="ChEBI" id="CHEBI:37565"/>
    </ligand>
</feature>
<feature type="binding site" evidence="1">
    <location>
        <position position="173"/>
    </location>
    <ligand>
        <name>Mg(2+)</name>
        <dbReference type="ChEBI" id="CHEBI:18420"/>
    </ligand>
</feature>
<feature type="binding site" evidence="1">
    <location>
        <begin position="191"/>
        <end position="195"/>
    </location>
    <ligand>
        <name>GTP</name>
        <dbReference type="ChEBI" id="CHEBI:37565"/>
    </ligand>
</feature>
<feature type="binding site" evidence="1">
    <location>
        <position position="193"/>
    </location>
    <ligand>
        <name>Mg(2+)</name>
        <dbReference type="ChEBI" id="CHEBI:18420"/>
    </ligand>
</feature>
<feature type="binding site" evidence="1">
    <location>
        <begin position="213"/>
        <end position="216"/>
    </location>
    <ligand>
        <name>GTP</name>
        <dbReference type="ChEBI" id="CHEBI:37565"/>
    </ligand>
</feature>
<feature type="binding site" evidence="1">
    <location>
        <begin position="280"/>
        <end position="283"/>
    </location>
    <ligand>
        <name>GTP</name>
        <dbReference type="ChEBI" id="CHEBI:37565"/>
    </ligand>
</feature>
<feature type="binding site" evidence="1">
    <location>
        <begin position="309"/>
        <end position="311"/>
    </location>
    <ligand>
        <name>GTP</name>
        <dbReference type="ChEBI" id="CHEBI:37565"/>
    </ligand>
</feature>
<organism>
    <name type="scientific">Synechococcus sp. (strain JA-2-3B'a(2-13))</name>
    <name type="common">Cyanobacteria bacterium Yellowstone B-Prime</name>
    <dbReference type="NCBI Taxonomy" id="321332"/>
    <lineage>
        <taxon>Bacteria</taxon>
        <taxon>Bacillati</taxon>
        <taxon>Cyanobacteriota</taxon>
        <taxon>Cyanophyceae</taxon>
        <taxon>Synechococcales</taxon>
        <taxon>Synechococcaceae</taxon>
        <taxon>Synechococcus</taxon>
    </lineage>
</organism>
<dbReference type="EC" id="3.6.5.-" evidence="1"/>
<dbReference type="EMBL" id="CP000240">
    <property type="protein sequence ID" value="ABD03291.1"/>
    <property type="molecule type" value="Genomic_DNA"/>
</dbReference>
<dbReference type="RefSeq" id="WP_011433920.1">
    <property type="nucleotide sequence ID" value="NC_007776.1"/>
</dbReference>
<dbReference type="SMR" id="Q2JJ90"/>
<dbReference type="STRING" id="321332.CYB_2352"/>
<dbReference type="KEGG" id="cyb:CYB_2352"/>
<dbReference type="eggNOG" id="COG0536">
    <property type="taxonomic scope" value="Bacteria"/>
</dbReference>
<dbReference type="HOGENOM" id="CLU_011747_2_0_3"/>
<dbReference type="OrthoDB" id="9807318at2"/>
<dbReference type="Proteomes" id="UP000001938">
    <property type="component" value="Chromosome"/>
</dbReference>
<dbReference type="GO" id="GO:0005737">
    <property type="term" value="C:cytoplasm"/>
    <property type="evidence" value="ECO:0007669"/>
    <property type="project" value="UniProtKB-SubCell"/>
</dbReference>
<dbReference type="GO" id="GO:0005525">
    <property type="term" value="F:GTP binding"/>
    <property type="evidence" value="ECO:0007669"/>
    <property type="project" value="UniProtKB-UniRule"/>
</dbReference>
<dbReference type="GO" id="GO:0003924">
    <property type="term" value="F:GTPase activity"/>
    <property type="evidence" value="ECO:0007669"/>
    <property type="project" value="UniProtKB-UniRule"/>
</dbReference>
<dbReference type="GO" id="GO:0000287">
    <property type="term" value="F:magnesium ion binding"/>
    <property type="evidence" value="ECO:0007669"/>
    <property type="project" value="InterPro"/>
</dbReference>
<dbReference type="GO" id="GO:0042254">
    <property type="term" value="P:ribosome biogenesis"/>
    <property type="evidence" value="ECO:0007669"/>
    <property type="project" value="UniProtKB-UniRule"/>
</dbReference>
<dbReference type="CDD" id="cd01898">
    <property type="entry name" value="Obg"/>
    <property type="match status" value="1"/>
</dbReference>
<dbReference type="FunFam" id="2.70.210.12:FF:000001">
    <property type="entry name" value="GTPase Obg"/>
    <property type="match status" value="1"/>
</dbReference>
<dbReference type="Gene3D" id="2.70.210.12">
    <property type="entry name" value="GTP1/OBG domain"/>
    <property type="match status" value="1"/>
</dbReference>
<dbReference type="Gene3D" id="3.40.50.300">
    <property type="entry name" value="P-loop containing nucleotide triphosphate hydrolases"/>
    <property type="match status" value="1"/>
</dbReference>
<dbReference type="HAMAP" id="MF_01454">
    <property type="entry name" value="GTPase_Obg"/>
    <property type="match status" value="1"/>
</dbReference>
<dbReference type="InterPro" id="IPR031167">
    <property type="entry name" value="G_OBG"/>
</dbReference>
<dbReference type="InterPro" id="IPR006073">
    <property type="entry name" value="GTP-bd"/>
</dbReference>
<dbReference type="InterPro" id="IPR014100">
    <property type="entry name" value="GTP-bd_Obg/CgtA"/>
</dbReference>
<dbReference type="InterPro" id="IPR006074">
    <property type="entry name" value="GTP1-OBG_CS"/>
</dbReference>
<dbReference type="InterPro" id="IPR006169">
    <property type="entry name" value="GTP1_OBG_dom"/>
</dbReference>
<dbReference type="InterPro" id="IPR036726">
    <property type="entry name" value="GTP1_OBG_dom_sf"/>
</dbReference>
<dbReference type="InterPro" id="IPR045086">
    <property type="entry name" value="OBG_GTPase"/>
</dbReference>
<dbReference type="InterPro" id="IPR027417">
    <property type="entry name" value="P-loop_NTPase"/>
</dbReference>
<dbReference type="NCBIfam" id="TIGR02729">
    <property type="entry name" value="Obg_CgtA"/>
    <property type="match status" value="1"/>
</dbReference>
<dbReference type="NCBIfam" id="NF008955">
    <property type="entry name" value="PRK12297.1"/>
    <property type="match status" value="1"/>
</dbReference>
<dbReference type="NCBIfam" id="NF008956">
    <property type="entry name" value="PRK12299.1"/>
    <property type="match status" value="1"/>
</dbReference>
<dbReference type="PANTHER" id="PTHR11702">
    <property type="entry name" value="DEVELOPMENTALLY REGULATED GTP-BINDING PROTEIN-RELATED"/>
    <property type="match status" value="1"/>
</dbReference>
<dbReference type="PANTHER" id="PTHR11702:SF31">
    <property type="entry name" value="MITOCHONDRIAL RIBOSOME-ASSOCIATED GTPASE 2"/>
    <property type="match status" value="1"/>
</dbReference>
<dbReference type="Pfam" id="PF01018">
    <property type="entry name" value="GTP1_OBG"/>
    <property type="match status" value="1"/>
</dbReference>
<dbReference type="Pfam" id="PF01926">
    <property type="entry name" value="MMR_HSR1"/>
    <property type="match status" value="1"/>
</dbReference>
<dbReference type="PIRSF" id="PIRSF002401">
    <property type="entry name" value="GTP_bd_Obg/CgtA"/>
    <property type="match status" value="1"/>
</dbReference>
<dbReference type="PRINTS" id="PR00326">
    <property type="entry name" value="GTP1OBG"/>
</dbReference>
<dbReference type="SUPFAM" id="SSF82051">
    <property type="entry name" value="Obg GTP-binding protein N-terminal domain"/>
    <property type="match status" value="1"/>
</dbReference>
<dbReference type="SUPFAM" id="SSF52540">
    <property type="entry name" value="P-loop containing nucleoside triphosphate hydrolases"/>
    <property type="match status" value="1"/>
</dbReference>
<dbReference type="PROSITE" id="PS51710">
    <property type="entry name" value="G_OBG"/>
    <property type="match status" value="1"/>
</dbReference>
<dbReference type="PROSITE" id="PS00905">
    <property type="entry name" value="GTP1_OBG"/>
    <property type="match status" value="1"/>
</dbReference>
<dbReference type="PROSITE" id="PS51883">
    <property type="entry name" value="OBG"/>
    <property type="match status" value="1"/>
</dbReference>
<sequence length="347" mass="36473">MHFIDQAEIEVQGGNGGDGIVAFRREKYVPAGGPSGGNGGRGGSVILVADPGLQTLLDFRFQPVIKAEHGAKGGPNHRSGASGADRLVRVPCGTVVFNAETGELLGDLVGKGDQLLVARGGKGGLGNAHFLSNHNRAPRQFTKGEAGERVRLRLELKLIAEVGIVGLPNAGKSTLISVVSSARPKIADYPFTTLQPNLGVVPHPSGDGVVFADIPGLIEGAHLGVGLGHEFLRHVERTRVLIHLVDGTAADPVKDYQVIQQELRAYGHGLIDKPQILVLNKIDVLDPQQVAERAQRLSAAAGTSVVTISAIAKQGLDPLLQRVWQCLGRGSQQPAQLDLVGAKSIQS</sequence>
<comment type="function">
    <text evidence="1">An essential GTPase which binds GTP, GDP and possibly (p)ppGpp with moderate affinity, with high nucleotide exchange rates and a fairly low GTP hydrolysis rate. Plays a role in control of the cell cycle, stress response, ribosome biogenesis and in those bacteria that undergo differentiation, in morphogenesis control.</text>
</comment>
<comment type="cofactor">
    <cofactor evidence="1">
        <name>Mg(2+)</name>
        <dbReference type="ChEBI" id="CHEBI:18420"/>
    </cofactor>
</comment>
<comment type="subunit">
    <text evidence="1">Monomer.</text>
</comment>
<comment type="subcellular location">
    <subcellularLocation>
        <location evidence="1">Cytoplasm</location>
    </subcellularLocation>
</comment>
<comment type="similarity">
    <text evidence="1">Belongs to the TRAFAC class OBG-HflX-like GTPase superfamily. OBG GTPase family.</text>
</comment>
<proteinExistence type="inferred from homology"/>
<reference key="1">
    <citation type="journal article" date="2007" name="ISME J.">
        <title>Population level functional diversity in a microbial community revealed by comparative genomic and metagenomic analyses.</title>
        <authorList>
            <person name="Bhaya D."/>
            <person name="Grossman A.R."/>
            <person name="Steunou A.-S."/>
            <person name="Khuri N."/>
            <person name="Cohan F.M."/>
            <person name="Hamamura N."/>
            <person name="Melendrez M.C."/>
            <person name="Bateson M.M."/>
            <person name="Ward D.M."/>
            <person name="Heidelberg J.F."/>
        </authorList>
    </citation>
    <scope>NUCLEOTIDE SEQUENCE [LARGE SCALE GENOMIC DNA]</scope>
    <source>
        <strain>JA-2-3B'a(2-13)</strain>
    </source>
</reference>
<gene>
    <name evidence="1" type="primary">obg</name>
    <name type="ordered locus">CYB_2352</name>
</gene>
<name>OBG_SYNJB</name>
<protein>
    <recommendedName>
        <fullName evidence="1">GTPase Obg</fullName>
        <ecNumber evidence="1">3.6.5.-</ecNumber>
    </recommendedName>
    <alternativeName>
        <fullName evidence="1">GTP-binding protein Obg</fullName>
    </alternativeName>
</protein>
<accession>Q2JJ90</accession>
<keyword id="KW-0963">Cytoplasm</keyword>
<keyword id="KW-0342">GTP-binding</keyword>
<keyword id="KW-0378">Hydrolase</keyword>
<keyword id="KW-0460">Magnesium</keyword>
<keyword id="KW-0479">Metal-binding</keyword>
<keyword id="KW-0547">Nucleotide-binding</keyword>
<keyword id="KW-1185">Reference proteome</keyword>
<evidence type="ECO:0000255" key="1">
    <source>
        <dbReference type="HAMAP-Rule" id="MF_01454"/>
    </source>
</evidence>
<evidence type="ECO:0000255" key="2">
    <source>
        <dbReference type="PROSITE-ProRule" id="PRU01231"/>
    </source>
</evidence>